<keyword id="KW-0119">Carbohydrate metabolism</keyword>
<keyword id="KW-1015">Disulfide bond</keyword>
<keyword id="KW-0325">Glycoprotein</keyword>
<keyword id="KW-0326">Glycosidase</keyword>
<keyword id="KW-0378">Hydrolase</keyword>
<keyword id="KW-0624">Polysaccharide degradation</keyword>
<keyword id="KW-0964">Secreted</keyword>
<keyword id="KW-0732">Signal</keyword>
<protein>
    <recommendedName>
        <fullName>Probable beta-galactosidase A</fullName>
        <ecNumber>3.2.1.23</ecNumber>
    </recommendedName>
    <alternativeName>
        <fullName>Lactase A</fullName>
    </alternativeName>
</protein>
<feature type="signal peptide" evidence="2">
    <location>
        <begin position="1"/>
        <end position="18"/>
    </location>
</feature>
<feature type="chain" id="PRO_0000395219" description="Probable beta-galactosidase A">
    <location>
        <begin position="19"/>
        <end position="1007"/>
    </location>
</feature>
<feature type="region of interest" description="Disordered" evidence="3">
    <location>
        <begin position="862"/>
        <end position="881"/>
    </location>
</feature>
<feature type="active site" description="Proton donor" evidence="2">
    <location>
        <position position="200"/>
    </location>
</feature>
<feature type="active site" description="Nucleophile" evidence="2">
    <location>
        <position position="298"/>
    </location>
</feature>
<feature type="binding site" evidence="1">
    <location>
        <position position="96"/>
    </location>
    <ligand>
        <name>substrate</name>
    </ligand>
</feature>
<feature type="binding site" evidence="1">
    <location>
        <position position="140"/>
    </location>
    <ligand>
        <name>substrate</name>
    </ligand>
</feature>
<feature type="binding site" evidence="1">
    <location>
        <position position="141"/>
    </location>
    <ligand>
        <name>substrate</name>
    </ligand>
</feature>
<feature type="binding site" evidence="1">
    <location>
        <position position="142"/>
    </location>
    <ligand>
        <name>substrate</name>
    </ligand>
</feature>
<feature type="binding site" evidence="1">
    <location>
        <position position="199"/>
    </location>
    <ligand>
        <name>substrate</name>
    </ligand>
</feature>
<feature type="binding site" evidence="1">
    <location>
        <position position="260"/>
    </location>
    <ligand>
        <name>substrate</name>
    </ligand>
</feature>
<feature type="binding site" evidence="1">
    <location>
        <position position="364"/>
    </location>
    <ligand>
        <name>substrate</name>
    </ligand>
</feature>
<feature type="glycosylation site" description="N-linked (GlcNAc...) asparagine" evidence="2">
    <location>
        <position position="156"/>
    </location>
</feature>
<feature type="glycosylation site" description="N-linked (GlcNAc...) asparagine" evidence="2">
    <location>
        <position position="373"/>
    </location>
</feature>
<feature type="glycosylation site" description="N-linked (GlcNAc...) asparagine" evidence="2">
    <location>
        <position position="402"/>
    </location>
</feature>
<feature type="glycosylation site" description="N-linked (GlcNAc...) asparagine" evidence="2">
    <location>
        <position position="422"/>
    </location>
</feature>
<feature type="glycosylation site" description="N-linked (GlcNAc...) asparagine" evidence="2">
    <location>
        <position position="478"/>
    </location>
</feature>
<feature type="glycosylation site" description="N-linked (GlcNAc...) asparagine" evidence="2">
    <location>
        <position position="522"/>
    </location>
</feature>
<feature type="glycosylation site" description="N-linked (GlcNAc...) asparagine" evidence="2">
    <location>
        <position position="622"/>
    </location>
</feature>
<feature type="glycosylation site" description="N-linked (GlcNAc...) asparagine" evidence="2">
    <location>
        <position position="739"/>
    </location>
</feature>
<feature type="glycosylation site" description="N-linked (GlcNAc...) asparagine" evidence="2">
    <location>
        <position position="760"/>
    </location>
</feature>
<feature type="glycosylation site" description="N-linked (GlcNAc...) asparagine" evidence="2">
    <location>
        <position position="777"/>
    </location>
</feature>
<feature type="glycosylation site" description="N-linked (GlcNAc...) asparagine" evidence="2">
    <location>
        <position position="805"/>
    </location>
</feature>
<feature type="glycosylation site" description="N-linked (GlcNAc...) asparagine" evidence="2">
    <location>
        <position position="914"/>
    </location>
</feature>
<feature type="disulfide bond" evidence="1">
    <location>
        <begin position="205"/>
        <end position="206"/>
    </location>
</feature>
<feature type="disulfide bond" evidence="1">
    <location>
        <begin position="266"/>
        <end position="315"/>
    </location>
</feature>
<gene>
    <name type="primary">lacA</name>
</gene>
<name>BGALA_ASPPH</name>
<proteinExistence type="evidence at transcript level"/>
<comment type="function">
    <text evidence="1">Cleaves beta-linked terminal galactosyl residues from gangliosides, glycoproteins, and glycosaminoglycans.</text>
</comment>
<comment type="catalytic activity">
    <reaction>
        <text>Hydrolysis of terminal non-reducing beta-D-galactose residues in beta-D-galactosides.</text>
        <dbReference type="EC" id="3.2.1.23"/>
    </reaction>
</comment>
<comment type="subcellular location">
    <subcellularLocation>
        <location evidence="1">Secreted</location>
    </subcellularLocation>
</comment>
<comment type="similarity">
    <text evidence="4">Belongs to the glycosyl hydrolase 35 family.</text>
</comment>
<sequence length="1007" mass="109682">MKLSSACAIALLAAQAAGASIKHRINGFTLTEHSDPAKRELLQKYVTWDDKSLFINGERIMIFSGEFHPFRLPVKELQLDIFQKVKALGFNCVSFYVDWALVEGEPGEYRADGIFDLEPFFDAASEAGIYLLARPGPYINAESSGGGFPGWLQRVNGTLRSSDKAYLDATDNYVSHVAATIAKYQITNGGPIILYQPENEYTSGCCGVEFPDPVYMQYVEDQARNAGVVIPLINNDASASGNNAPGTGKGAVDIYGHDSYPLGFDCANPTVWPSGDLPTNFRTLHLEQSPTTPYAIVEFQGGSYDPWGGPGFAACSELLNNEFERVSYKNDFSFQIAIMNLYMIFGGTNWGNLGYPNGYTSYDYGSAVTESRNITREKYSELKLLGNFAKVSPGYLTASPGNLTTSGYADTTDLTVTPLLGNSTGSFFVVRHSDYSSEESTSYKLRLPTSASSVTIPQLGGTLTLNGRDSKIHVTDYNVSGTNIIYSTAEVFTWKKFADGKVLVLYGGAGEHHELAISTKSNVTVIEGSESGISSKQTSSSVVVGWDVSTTRRIIQVGDLKILLLDRNSAYNYWVPQLATDGTSPGFSTPEKVASSIIVKAGYLVRTAYLKGSGLYLTADFNATTSVEVIGVPSTAKNLFINGDKTSHTVDKNGIWSATVDYNAPDISLPSLKDLDWKYVDTLPEIQSSYDDSLWPAADLKQTKNTLRSLTTPTSLYSSDYGFHTGYLLYRGHFTATGNESTFAIDTQGGSAFGSSVWLNGTYLGSWTGLYANSDYNATYNLPQLQAGKTYVITVVINNMGLEENWTVGEDLMKTPRGILNFLLAGRPSSAISWKLTGNLGGEDYEDKVRGPLNEGGLYAERQGFHQPEPPSQDWKSSSPLEGLSEAGIGFYSASFDLDLPKGWDVPLFLNIGNSTTPSPYRVQVYVNGYQYAKYISNIGPQTSFPVPEGILNYRGTNWLAVTLWALDSAGGKLESLELSYTTPVLTALGEVESVDQPKYKKRKGAY</sequence>
<accession>Q4ZHV7</accession>
<dbReference type="EC" id="3.2.1.23"/>
<dbReference type="EMBL" id="DQ008057">
    <property type="protein sequence ID" value="AAY21925.1"/>
    <property type="molecule type" value="mRNA"/>
</dbReference>
<dbReference type="SMR" id="Q4ZHV7"/>
<dbReference type="CAZy" id="GH35">
    <property type="family name" value="Glycoside Hydrolase Family 35"/>
</dbReference>
<dbReference type="GlyCosmos" id="Q4ZHV7">
    <property type="glycosylation" value="12 sites, No reported glycans"/>
</dbReference>
<dbReference type="GO" id="GO:0005576">
    <property type="term" value="C:extracellular region"/>
    <property type="evidence" value="ECO:0007669"/>
    <property type="project" value="UniProtKB-SubCell"/>
</dbReference>
<dbReference type="GO" id="GO:0004565">
    <property type="term" value="F:beta-galactosidase activity"/>
    <property type="evidence" value="ECO:0007669"/>
    <property type="project" value="UniProtKB-EC"/>
</dbReference>
<dbReference type="GO" id="GO:0000272">
    <property type="term" value="P:polysaccharide catabolic process"/>
    <property type="evidence" value="ECO:0007669"/>
    <property type="project" value="UniProtKB-KW"/>
</dbReference>
<dbReference type="FunFam" id="2.102.20.10:FF:000001">
    <property type="entry name" value="Beta-galactosidase A"/>
    <property type="match status" value="1"/>
</dbReference>
<dbReference type="FunFam" id="2.60.120.260:FF:000065">
    <property type="entry name" value="Beta-galactosidase A"/>
    <property type="match status" value="1"/>
</dbReference>
<dbReference type="FunFam" id="2.60.120.260:FF:000088">
    <property type="entry name" value="Beta-galactosidase A"/>
    <property type="match status" value="1"/>
</dbReference>
<dbReference type="FunFam" id="2.60.390.10:FF:000001">
    <property type="entry name" value="Beta-galactosidase A"/>
    <property type="match status" value="1"/>
</dbReference>
<dbReference type="FunFam" id="3.20.20.80:FF:000040">
    <property type="entry name" value="Beta-galactosidase A"/>
    <property type="match status" value="1"/>
</dbReference>
<dbReference type="Gene3D" id="2.102.20.10">
    <property type="entry name" value="Beta-galactosidase, domain 2"/>
    <property type="match status" value="1"/>
</dbReference>
<dbReference type="Gene3D" id="2.60.390.10">
    <property type="entry name" value="Beta-galactosidase, domain 3"/>
    <property type="match status" value="1"/>
</dbReference>
<dbReference type="Gene3D" id="2.60.120.260">
    <property type="entry name" value="Galactose-binding domain-like"/>
    <property type="match status" value="2"/>
</dbReference>
<dbReference type="Gene3D" id="3.20.20.80">
    <property type="entry name" value="Glycosidases"/>
    <property type="match status" value="1"/>
</dbReference>
<dbReference type="InterPro" id="IPR018954">
    <property type="entry name" value="Betagal_dom2"/>
</dbReference>
<dbReference type="InterPro" id="IPR037110">
    <property type="entry name" value="Betagal_dom2_sf"/>
</dbReference>
<dbReference type="InterPro" id="IPR025972">
    <property type="entry name" value="BetaGal_dom3"/>
</dbReference>
<dbReference type="InterPro" id="IPR036833">
    <property type="entry name" value="BetaGal_dom3_sf"/>
</dbReference>
<dbReference type="InterPro" id="IPR025300">
    <property type="entry name" value="BetaGal_jelly_roll_dom"/>
</dbReference>
<dbReference type="InterPro" id="IPR008979">
    <property type="entry name" value="Galactose-bd-like_sf"/>
</dbReference>
<dbReference type="InterPro" id="IPR031330">
    <property type="entry name" value="Gly_Hdrlase_35_cat"/>
</dbReference>
<dbReference type="InterPro" id="IPR019801">
    <property type="entry name" value="Glyco_hydro_35_CS"/>
</dbReference>
<dbReference type="InterPro" id="IPR001944">
    <property type="entry name" value="Glycoside_Hdrlase_35"/>
</dbReference>
<dbReference type="InterPro" id="IPR017853">
    <property type="entry name" value="Glycoside_hydrolase_SF"/>
</dbReference>
<dbReference type="PANTHER" id="PTHR23421">
    <property type="entry name" value="BETA-GALACTOSIDASE RELATED"/>
    <property type="match status" value="1"/>
</dbReference>
<dbReference type="Pfam" id="PF13364">
    <property type="entry name" value="BetaGal_ABD2"/>
    <property type="match status" value="2"/>
</dbReference>
<dbReference type="Pfam" id="PF10435">
    <property type="entry name" value="BetaGal_dom2"/>
    <property type="match status" value="1"/>
</dbReference>
<dbReference type="Pfam" id="PF13363">
    <property type="entry name" value="BetaGal_dom3"/>
    <property type="match status" value="1"/>
</dbReference>
<dbReference type="Pfam" id="PF01301">
    <property type="entry name" value="Glyco_hydro_35"/>
    <property type="match status" value="1"/>
</dbReference>
<dbReference type="PRINTS" id="PR00742">
    <property type="entry name" value="GLHYDRLASE35"/>
</dbReference>
<dbReference type="SMART" id="SM01029">
    <property type="entry name" value="BetaGal_dom2"/>
    <property type="match status" value="1"/>
</dbReference>
<dbReference type="SUPFAM" id="SSF51445">
    <property type="entry name" value="(Trans)glycosidases"/>
    <property type="match status" value="1"/>
</dbReference>
<dbReference type="SUPFAM" id="SSF117100">
    <property type="entry name" value="Beta-galactosidase LacA, domain 3"/>
    <property type="match status" value="1"/>
</dbReference>
<dbReference type="SUPFAM" id="SSF49785">
    <property type="entry name" value="Galactose-binding domain-like"/>
    <property type="match status" value="2"/>
</dbReference>
<dbReference type="SUPFAM" id="SSF51011">
    <property type="entry name" value="Glycosyl hydrolase domain"/>
    <property type="match status" value="1"/>
</dbReference>
<dbReference type="PROSITE" id="PS01182">
    <property type="entry name" value="GLYCOSYL_HYDROL_F35"/>
    <property type="match status" value="1"/>
</dbReference>
<reference key="1">
    <citation type="submission" date="2005-04" db="EMBL/GenBank/DDBJ databases">
        <title>The cDNA sequence of beta-galactosidase from Aspergillus phoenicis.</title>
        <authorList>
            <person name="Wang W.K."/>
            <person name="Dong Z.Y."/>
            <person name="Mao A.J."/>
        </authorList>
    </citation>
    <scope>NUCLEOTIDE SEQUENCE [MRNA]</scope>
    <source>
        <strain>AS.3.3143</strain>
    </source>
</reference>
<evidence type="ECO:0000250" key="1"/>
<evidence type="ECO:0000255" key="2"/>
<evidence type="ECO:0000256" key="3">
    <source>
        <dbReference type="SAM" id="MobiDB-lite"/>
    </source>
</evidence>
<evidence type="ECO:0000305" key="4"/>
<organism>
    <name type="scientific">Aspergillus phoenicis</name>
    <name type="common">Aspergillus saitoi</name>
    <dbReference type="NCBI Taxonomy" id="5063"/>
    <lineage>
        <taxon>Eukaryota</taxon>
        <taxon>Fungi</taxon>
        <taxon>Dikarya</taxon>
        <taxon>Ascomycota</taxon>
        <taxon>Pezizomycotina</taxon>
        <taxon>Eurotiomycetes</taxon>
        <taxon>Eurotiomycetidae</taxon>
        <taxon>Eurotiales</taxon>
        <taxon>Aspergillaceae</taxon>
        <taxon>Aspergillus</taxon>
    </lineage>
</organism>